<keyword id="KW-0328">Glycosyltransferase</keyword>
<keyword id="KW-1185">Reference proteome</keyword>
<keyword id="KW-0808">Transferase</keyword>
<comment type="function">
    <text evidence="1">Catalyzes the phosphorolysis of diverse nucleosides, yielding D-ribose 1-phosphate and the respective free bases. Can use uridine, adenosine, guanosine, cytidine, thymidine, inosine and xanthosine as substrates. Also catalyzes the reverse reactions.</text>
</comment>
<comment type="catalytic activity">
    <reaction evidence="1">
        <text>a purine D-ribonucleoside + phosphate = a purine nucleobase + alpha-D-ribose 1-phosphate</text>
        <dbReference type="Rhea" id="RHEA:19805"/>
        <dbReference type="ChEBI" id="CHEBI:26386"/>
        <dbReference type="ChEBI" id="CHEBI:43474"/>
        <dbReference type="ChEBI" id="CHEBI:57720"/>
        <dbReference type="ChEBI" id="CHEBI:142355"/>
        <dbReference type="EC" id="2.4.2.1"/>
    </reaction>
</comment>
<comment type="catalytic activity">
    <reaction evidence="1">
        <text>adenosine + phosphate = alpha-D-ribose 1-phosphate + adenine</text>
        <dbReference type="Rhea" id="RHEA:27642"/>
        <dbReference type="ChEBI" id="CHEBI:16335"/>
        <dbReference type="ChEBI" id="CHEBI:16708"/>
        <dbReference type="ChEBI" id="CHEBI:43474"/>
        <dbReference type="ChEBI" id="CHEBI:57720"/>
        <dbReference type="EC" id="2.4.2.1"/>
    </reaction>
</comment>
<comment type="catalytic activity">
    <reaction evidence="1">
        <text>cytidine + phosphate = cytosine + alpha-D-ribose 1-phosphate</text>
        <dbReference type="Rhea" id="RHEA:52540"/>
        <dbReference type="ChEBI" id="CHEBI:16040"/>
        <dbReference type="ChEBI" id="CHEBI:17562"/>
        <dbReference type="ChEBI" id="CHEBI:43474"/>
        <dbReference type="ChEBI" id="CHEBI:57720"/>
        <dbReference type="EC" id="2.4.2.2"/>
    </reaction>
</comment>
<comment type="catalytic activity">
    <reaction evidence="1">
        <text>guanosine + phosphate = alpha-D-ribose 1-phosphate + guanine</text>
        <dbReference type="Rhea" id="RHEA:13233"/>
        <dbReference type="ChEBI" id="CHEBI:16235"/>
        <dbReference type="ChEBI" id="CHEBI:16750"/>
        <dbReference type="ChEBI" id="CHEBI:43474"/>
        <dbReference type="ChEBI" id="CHEBI:57720"/>
        <dbReference type="EC" id="2.4.2.1"/>
    </reaction>
</comment>
<comment type="catalytic activity">
    <reaction evidence="1">
        <text>inosine + phosphate = alpha-D-ribose 1-phosphate + hypoxanthine</text>
        <dbReference type="Rhea" id="RHEA:27646"/>
        <dbReference type="ChEBI" id="CHEBI:17368"/>
        <dbReference type="ChEBI" id="CHEBI:17596"/>
        <dbReference type="ChEBI" id="CHEBI:43474"/>
        <dbReference type="ChEBI" id="CHEBI:57720"/>
        <dbReference type="EC" id="2.4.2.1"/>
    </reaction>
</comment>
<comment type="catalytic activity">
    <reaction evidence="1">
        <text>thymidine + phosphate = 2-deoxy-alpha-D-ribose 1-phosphate + thymine</text>
        <dbReference type="Rhea" id="RHEA:16037"/>
        <dbReference type="ChEBI" id="CHEBI:17748"/>
        <dbReference type="ChEBI" id="CHEBI:17821"/>
        <dbReference type="ChEBI" id="CHEBI:43474"/>
        <dbReference type="ChEBI" id="CHEBI:57259"/>
        <dbReference type="EC" id="2.4.2.2"/>
    </reaction>
</comment>
<comment type="catalytic activity">
    <reaction evidence="1">
        <text>uridine + phosphate = alpha-D-ribose 1-phosphate + uracil</text>
        <dbReference type="Rhea" id="RHEA:24388"/>
        <dbReference type="ChEBI" id="CHEBI:16704"/>
        <dbReference type="ChEBI" id="CHEBI:17568"/>
        <dbReference type="ChEBI" id="CHEBI:43474"/>
        <dbReference type="ChEBI" id="CHEBI:57720"/>
        <dbReference type="EC" id="2.4.2.2"/>
    </reaction>
</comment>
<comment type="catalytic activity">
    <reaction evidence="1">
        <text>xanthosine + phosphate = alpha-D-ribose 1-phosphate + xanthine</text>
        <dbReference type="Rhea" id="RHEA:27638"/>
        <dbReference type="ChEBI" id="CHEBI:17712"/>
        <dbReference type="ChEBI" id="CHEBI:18107"/>
        <dbReference type="ChEBI" id="CHEBI:43474"/>
        <dbReference type="ChEBI" id="CHEBI:57720"/>
        <dbReference type="EC" id="2.4.2.1"/>
    </reaction>
</comment>
<comment type="similarity">
    <text evidence="1">Belongs to the nucleoside phosphorylase PpnP family.</text>
</comment>
<name>PPNP_SHEAM</name>
<evidence type="ECO:0000255" key="1">
    <source>
        <dbReference type="HAMAP-Rule" id="MF_01537"/>
    </source>
</evidence>
<reference key="1">
    <citation type="submission" date="2006-12" db="EMBL/GenBank/DDBJ databases">
        <title>Complete sequence of Shewanella amazonensis SB2B.</title>
        <authorList>
            <consortium name="US DOE Joint Genome Institute"/>
            <person name="Copeland A."/>
            <person name="Lucas S."/>
            <person name="Lapidus A."/>
            <person name="Barry K."/>
            <person name="Detter J.C."/>
            <person name="Glavina del Rio T."/>
            <person name="Hammon N."/>
            <person name="Israni S."/>
            <person name="Dalin E."/>
            <person name="Tice H."/>
            <person name="Pitluck S."/>
            <person name="Munk A.C."/>
            <person name="Brettin T."/>
            <person name="Bruce D."/>
            <person name="Han C."/>
            <person name="Tapia R."/>
            <person name="Gilna P."/>
            <person name="Schmutz J."/>
            <person name="Larimer F."/>
            <person name="Land M."/>
            <person name="Hauser L."/>
            <person name="Kyrpides N."/>
            <person name="Mikhailova N."/>
            <person name="Fredrickson J."/>
            <person name="Richardson P."/>
        </authorList>
    </citation>
    <scope>NUCLEOTIDE SEQUENCE [LARGE SCALE GENOMIC DNA]</scope>
    <source>
        <strain>ATCC BAA-1098 / SB2B</strain>
    </source>
</reference>
<dbReference type="EC" id="2.4.2.1" evidence="1"/>
<dbReference type="EC" id="2.4.2.2" evidence="1"/>
<dbReference type="EMBL" id="CP000507">
    <property type="protein sequence ID" value="ABM01627.1"/>
    <property type="molecule type" value="Genomic_DNA"/>
</dbReference>
<dbReference type="RefSeq" id="WP_011761531.1">
    <property type="nucleotide sequence ID" value="NC_008700.1"/>
</dbReference>
<dbReference type="SMR" id="A1SB70"/>
<dbReference type="STRING" id="326297.Sama_3424"/>
<dbReference type="KEGG" id="saz:Sama_3424"/>
<dbReference type="eggNOG" id="COG3123">
    <property type="taxonomic scope" value="Bacteria"/>
</dbReference>
<dbReference type="HOGENOM" id="CLU_157874_0_0_6"/>
<dbReference type="OrthoDB" id="9793848at2"/>
<dbReference type="Proteomes" id="UP000009175">
    <property type="component" value="Chromosome"/>
</dbReference>
<dbReference type="GO" id="GO:0005829">
    <property type="term" value="C:cytosol"/>
    <property type="evidence" value="ECO:0007669"/>
    <property type="project" value="TreeGrafter"/>
</dbReference>
<dbReference type="GO" id="GO:0047975">
    <property type="term" value="F:guanosine phosphorylase activity"/>
    <property type="evidence" value="ECO:0007669"/>
    <property type="project" value="UniProtKB-EC"/>
</dbReference>
<dbReference type="GO" id="GO:0004731">
    <property type="term" value="F:purine-nucleoside phosphorylase activity"/>
    <property type="evidence" value="ECO:0007669"/>
    <property type="project" value="UniProtKB-UniRule"/>
</dbReference>
<dbReference type="GO" id="GO:0009032">
    <property type="term" value="F:thymidine phosphorylase activity"/>
    <property type="evidence" value="ECO:0007669"/>
    <property type="project" value="UniProtKB-EC"/>
</dbReference>
<dbReference type="GO" id="GO:0004850">
    <property type="term" value="F:uridine phosphorylase activity"/>
    <property type="evidence" value="ECO:0007669"/>
    <property type="project" value="UniProtKB-EC"/>
</dbReference>
<dbReference type="CDD" id="cd20296">
    <property type="entry name" value="cupin_PpnP-like"/>
    <property type="match status" value="1"/>
</dbReference>
<dbReference type="FunFam" id="2.60.120.10:FF:000016">
    <property type="entry name" value="Pyrimidine/purine nucleoside phosphorylase"/>
    <property type="match status" value="1"/>
</dbReference>
<dbReference type="Gene3D" id="2.60.120.10">
    <property type="entry name" value="Jelly Rolls"/>
    <property type="match status" value="1"/>
</dbReference>
<dbReference type="HAMAP" id="MF_01537">
    <property type="entry name" value="Nucleos_phosphorylase_PpnP"/>
    <property type="match status" value="1"/>
</dbReference>
<dbReference type="InterPro" id="IPR009664">
    <property type="entry name" value="Ppnp"/>
</dbReference>
<dbReference type="InterPro" id="IPR014710">
    <property type="entry name" value="RmlC-like_jellyroll"/>
</dbReference>
<dbReference type="InterPro" id="IPR011051">
    <property type="entry name" value="RmlC_Cupin_sf"/>
</dbReference>
<dbReference type="PANTHER" id="PTHR36540">
    <property type="entry name" value="PYRIMIDINE/PURINE NUCLEOSIDE PHOSPHORYLASE"/>
    <property type="match status" value="1"/>
</dbReference>
<dbReference type="PANTHER" id="PTHR36540:SF1">
    <property type="entry name" value="PYRIMIDINE_PURINE NUCLEOSIDE PHOSPHORYLASE"/>
    <property type="match status" value="1"/>
</dbReference>
<dbReference type="Pfam" id="PF06865">
    <property type="entry name" value="Ppnp"/>
    <property type="match status" value="1"/>
</dbReference>
<dbReference type="SUPFAM" id="SSF51182">
    <property type="entry name" value="RmlC-like cupins"/>
    <property type="match status" value="1"/>
</dbReference>
<gene>
    <name evidence="1" type="primary">ppnP</name>
    <name type="ordered locus">Sama_3424</name>
</gene>
<protein>
    <recommendedName>
        <fullName evidence="1">Pyrimidine/purine nucleoside phosphorylase</fullName>
        <ecNumber evidence="1">2.4.2.1</ecNumber>
        <ecNumber evidence="1">2.4.2.2</ecNumber>
    </recommendedName>
    <alternativeName>
        <fullName evidence="1">Adenosine phosphorylase</fullName>
    </alternativeName>
    <alternativeName>
        <fullName evidence="1">Cytidine phosphorylase</fullName>
    </alternativeName>
    <alternativeName>
        <fullName evidence="1">Guanosine phosphorylase</fullName>
    </alternativeName>
    <alternativeName>
        <fullName evidence="1">Inosine phosphorylase</fullName>
    </alternativeName>
    <alternativeName>
        <fullName evidence="1">Thymidine phosphorylase</fullName>
    </alternativeName>
    <alternativeName>
        <fullName evidence="1">Uridine phosphorylase</fullName>
    </alternativeName>
    <alternativeName>
        <fullName evidence="1">Xanthosine phosphorylase</fullName>
    </alternativeName>
</protein>
<proteinExistence type="inferred from homology"/>
<feature type="chain" id="PRO_0000298722" description="Pyrimidine/purine nucleoside phosphorylase">
    <location>
        <begin position="1"/>
        <end position="102"/>
    </location>
</feature>
<organism>
    <name type="scientific">Shewanella amazonensis (strain ATCC BAA-1098 / SB2B)</name>
    <dbReference type="NCBI Taxonomy" id="326297"/>
    <lineage>
        <taxon>Bacteria</taxon>
        <taxon>Pseudomonadati</taxon>
        <taxon>Pseudomonadota</taxon>
        <taxon>Gammaproteobacteria</taxon>
        <taxon>Alteromonadales</taxon>
        <taxon>Shewanellaceae</taxon>
        <taxon>Shewanella</taxon>
    </lineage>
</organism>
<sequence length="102" mass="11213">MKVLENVNVALKANVYFDGKVTSRAIYVGGQKQTIGVVLPGEYEFSTTQPEQMQVTSGSFEVLLPGESQWQTFAEGSTFNLDADVSFSIRATDVAEYLCSYL</sequence>
<accession>A1SB70</accession>